<reference key="1">
    <citation type="submission" date="2006-08" db="EMBL/GenBank/DDBJ databases">
        <title>Complete sequence of Shewanella sp. MR-4.</title>
        <authorList>
            <consortium name="US DOE Joint Genome Institute"/>
            <person name="Copeland A."/>
            <person name="Lucas S."/>
            <person name="Lapidus A."/>
            <person name="Barry K."/>
            <person name="Detter J.C."/>
            <person name="Glavina del Rio T."/>
            <person name="Hammon N."/>
            <person name="Israni S."/>
            <person name="Dalin E."/>
            <person name="Tice H."/>
            <person name="Pitluck S."/>
            <person name="Kiss H."/>
            <person name="Brettin T."/>
            <person name="Bruce D."/>
            <person name="Han C."/>
            <person name="Tapia R."/>
            <person name="Gilna P."/>
            <person name="Schmutz J."/>
            <person name="Larimer F."/>
            <person name="Land M."/>
            <person name="Hauser L."/>
            <person name="Kyrpides N."/>
            <person name="Mikhailova N."/>
            <person name="Nealson K."/>
            <person name="Konstantinidis K."/>
            <person name="Klappenbach J."/>
            <person name="Tiedje J."/>
            <person name="Richardson P."/>
        </authorList>
    </citation>
    <scope>NUCLEOTIDE SEQUENCE [LARGE SCALE GENOMIC DNA]</scope>
    <source>
        <strain>MR-4</strain>
    </source>
</reference>
<organism>
    <name type="scientific">Shewanella sp. (strain MR-4)</name>
    <dbReference type="NCBI Taxonomy" id="60480"/>
    <lineage>
        <taxon>Bacteria</taxon>
        <taxon>Pseudomonadati</taxon>
        <taxon>Pseudomonadota</taxon>
        <taxon>Gammaproteobacteria</taxon>
        <taxon>Alteromonadales</taxon>
        <taxon>Shewanellaceae</taxon>
        <taxon>Shewanella</taxon>
    </lineage>
</organism>
<evidence type="ECO:0000255" key="1">
    <source>
        <dbReference type="HAMAP-Rule" id="MF_00197"/>
    </source>
</evidence>
<gene>
    <name evidence="1" type="primary">dapF</name>
    <name type="ordered locus">Shewmr4_0392</name>
</gene>
<feature type="chain" id="PRO_1000011967" description="Diaminopimelate epimerase">
    <location>
        <begin position="1"/>
        <end position="275"/>
    </location>
</feature>
<feature type="active site" description="Proton donor" evidence="1">
    <location>
        <position position="74"/>
    </location>
</feature>
<feature type="active site" description="Proton acceptor" evidence="1">
    <location>
        <position position="218"/>
    </location>
</feature>
<feature type="binding site" evidence="1">
    <location>
        <position position="12"/>
    </location>
    <ligand>
        <name>substrate</name>
    </ligand>
</feature>
<feature type="binding site" evidence="1">
    <location>
        <position position="45"/>
    </location>
    <ligand>
        <name>substrate</name>
    </ligand>
</feature>
<feature type="binding site" evidence="1">
    <location>
        <position position="65"/>
    </location>
    <ligand>
        <name>substrate</name>
    </ligand>
</feature>
<feature type="binding site" evidence="1">
    <location>
        <begin position="75"/>
        <end position="76"/>
    </location>
    <ligand>
        <name>substrate</name>
    </ligand>
</feature>
<feature type="binding site" evidence="1">
    <location>
        <position position="158"/>
    </location>
    <ligand>
        <name>substrate</name>
    </ligand>
</feature>
<feature type="binding site" evidence="1">
    <location>
        <position position="191"/>
    </location>
    <ligand>
        <name>substrate</name>
    </ligand>
</feature>
<feature type="binding site" evidence="1">
    <location>
        <begin position="209"/>
        <end position="210"/>
    </location>
    <ligand>
        <name>substrate</name>
    </ligand>
</feature>
<feature type="binding site" evidence="1">
    <location>
        <begin position="219"/>
        <end position="220"/>
    </location>
    <ligand>
        <name>substrate</name>
    </ligand>
</feature>
<feature type="site" description="Could be important to modulate the pK values of the two catalytic cysteine residues" evidence="1">
    <location>
        <position position="160"/>
    </location>
</feature>
<feature type="site" description="Could be important to modulate the pK values of the two catalytic cysteine residues" evidence="1">
    <location>
        <position position="209"/>
    </location>
</feature>
<feature type="site" description="Important for dimerization" evidence="1">
    <location>
        <position position="269"/>
    </location>
</feature>
<proteinExistence type="inferred from homology"/>
<comment type="function">
    <text evidence="1">Catalyzes the stereoinversion of LL-2,6-diaminopimelate (L,L-DAP) to meso-diaminopimelate (meso-DAP), a precursor of L-lysine and an essential component of the bacterial peptidoglycan.</text>
</comment>
<comment type="catalytic activity">
    <reaction evidence="1">
        <text>(2S,6S)-2,6-diaminopimelate = meso-2,6-diaminopimelate</text>
        <dbReference type="Rhea" id="RHEA:15393"/>
        <dbReference type="ChEBI" id="CHEBI:57609"/>
        <dbReference type="ChEBI" id="CHEBI:57791"/>
        <dbReference type="EC" id="5.1.1.7"/>
    </reaction>
</comment>
<comment type="pathway">
    <text evidence="1">Amino-acid biosynthesis; L-lysine biosynthesis via DAP pathway; DL-2,6-diaminopimelate from LL-2,6-diaminopimelate: step 1/1.</text>
</comment>
<comment type="subunit">
    <text evidence="1">Homodimer.</text>
</comment>
<comment type="subcellular location">
    <subcellularLocation>
        <location evidence="1">Cytoplasm</location>
    </subcellularLocation>
</comment>
<comment type="similarity">
    <text evidence="1">Belongs to the diaminopimelate epimerase family.</text>
</comment>
<protein>
    <recommendedName>
        <fullName evidence="1">Diaminopimelate epimerase</fullName>
        <shortName evidence="1">DAP epimerase</shortName>
        <ecNumber evidence="1">5.1.1.7</ecNumber>
    </recommendedName>
    <alternativeName>
        <fullName evidence="1">PLP-independent amino acid racemase</fullName>
    </alternativeName>
</protein>
<sequence>MIQFTKMHGLGNDFMVVDGVTQNVFFSPEQIRRLADRNFGVGFDQLLLVEPPYDPDLDFHYRIFNADGGEVENCGNGARCFARFVRNKGLTNKNKIRVSTSAGKMTLRLERDGTVTVNMGVPVLDPSQIPFKAKKAEKTYLLQTSQQTFLCGAASMGNPHCVLDVEDVANANVAEIGALLTKHERFPRGVNVGFMQVVNSGHIKLRVYERGAAETLACGTGACAAVVVGQIQGKLDQQVRVDLPGGTLTINWEGEGKPLWMTGPAQHVYDGQIQL</sequence>
<name>DAPF_SHESM</name>
<keyword id="KW-0028">Amino-acid biosynthesis</keyword>
<keyword id="KW-0963">Cytoplasm</keyword>
<keyword id="KW-0413">Isomerase</keyword>
<keyword id="KW-0457">Lysine biosynthesis</keyword>
<dbReference type="EC" id="5.1.1.7" evidence="1"/>
<dbReference type="EMBL" id="CP000446">
    <property type="protein sequence ID" value="ABI37472.1"/>
    <property type="molecule type" value="Genomic_DNA"/>
</dbReference>
<dbReference type="RefSeq" id="WP_011621198.1">
    <property type="nucleotide sequence ID" value="NC_008321.1"/>
</dbReference>
<dbReference type="SMR" id="Q0HN95"/>
<dbReference type="KEGG" id="she:Shewmr4_0392"/>
<dbReference type="HOGENOM" id="CLU_053306_1_1_6"/>
<dbReference type="UniPathway" id="UPA00034">
    <property type="reaction ID" value="UER00025"/>
</dbReference>
<dbReference type="GO" id="GO:0005829">
    <property type="term" value="C:cytosol"/>
    <property type="evidence" value="ECO:0007669"/>
    <property type="project" value="TreeGrafter"/>
</dbReference>
<dbReference type="GO" id="GO:0008837">
    <property type="term" value="F:diaminopimelate epimerase activity"/>
    <property type="evidence" value="ECO:0007669"/>
    <property type="project" value="UniProtKB-UniRule"/>
</dbReference>
<dbReference type="GO" id="GO:0009089">
    <property type="term" value="P:lysine biosynthetic process via diaminopimelate"/>
    <property type="evidence" value="ECO:0007669"/>
    <property type="project" value="UniProtKB-UniRule"/>
</dbReference>
<dbReference type="FunFam" id="3.10.310.10:FF:000001">
    <property type="entry name" value="Diaminopimelate epimerase"/>
    <property type="match status" value="1"/>
</dbReference>
<dbReference type="FunFam" id="3.10.310.10:FF:000002">
    <property type="entry name" value="Diaminopimelate epimerase"/>
    <property type="match status" value="1"/>
</dbReference>
<dbReference type="Gene3D" id="3.10.310.10">
    <property type="entry name" value="Diaminopimelate Epimerase, Chain A, domain 1"/>
    <property type="match status" value="2"/>
</dbReference>
<dbReference type="HAMAP" id="MF_00197">
    <property type="entry name" value="DAP_epimerase"/>
    <property type="match status" value="1"/>
</dbReference>
<dbReference type="InterPro" id="IPR018510">
    <property type="entry name" value="DAP_epimerase_AS"/>
</dbReference>
<dbReference type="InterPro" id="IPR001653">
    <property type="entry name" value="DAP_epimerase_DapF"/>
</dbReference>
<dbReference type="NCBIfam" id="TIGR00652">
    <property type="entry name" value="DapF"/>
    <property type="match status" value="1"/>
</dbReference>
<dbReference type="PANTHER" id="PTHR31689:SF0">
    <property type="entry name" value="DIAMINOPIMELATE EPIMERASE"/>
    <property type="match status" value="1"/>
</dbReference>
<dbReference type="PANTHER" id="PTHR31689">
    <property type="entry name" value="DIAMINOPIMELATE EPIMERASE, CHLOROPLASTIC"/>
    <property type="match status" value="1"/>
</dbReference>
<dbReference type="Pfam" id="PF01678">
    <property type="entry name" value="DAP_epimerase"/>
    <property type="match status" value="2"/>
</dbReference>
<dbReference type="SUPFAM" id="SSF54506">
    <property type="entry name" value="Diaminopimelate epimerase-like"/>
    <property type="match status" value="1"/>
</dbReference>
<dbReference type="PROSITE" id="PS01326">
    <property type="entry name" value="DAP_EPIMERASE"/>
    <property type="match status" value="1"/>
</dbReference>
<accession>Q0HN95</accession>